<evidence type="ECO:0000255" key="1">
    <source>
        <dbReference type="HAMAP-Rule" id="MF_01210"/>
    </source>
</evidence>
<dbReference type="EC" id="6.3.4.16" evidence="1"/>
<dbReference type="EC" id="6.3.5.5" evidence="1"/>
<dbReference type="EMBL" id="CP001213">
    <property type="protein sequence ID" value="ACL29442.1"/>
    <property type="molecule type" value="Genomic_DNA"/>
</dbReference>
<dbReference type="RefSeq" id="WP_004218885.1">
    <property type="nucleotide sequence ID" value="NC_011835.1"/>
</dbReference>
<dbReference type="SMR" id="B8DTW3"/>
<dbReference type="STRING" id="442563.BLA_1154"/>
<dbReference type="GeneID" id="29695800"/>
<dbReference type="KEGG" id="bla:BLA_1154"/>
<dbReference type="HOGENOM" id="CLU_000513_1_0_11"/>
<dbReference type="UniPathway" id="UPA00068">
    <property type="reaction ID" value="UER00171"/>
</dbReference>
<dbReference type="UniPathway" id="UPA00070">
    <property type="reaction ID" value="UER00115"/>
</dbReference>
<dbReference type="Proteomes" id="UP000002456">
    <property type="component" value="Chromosome"/>
</dbReference>
<dbReference type="GO" id="GO:0005737">
    <property type="term" value="C:cytoplasm"/>
    <property type="evidence" value="ECO:0007669"/>
    <property type="project" value="TreeGrafter"/>
</dbReference>
<dbReference type="GO" id="GO:0005524">
    <property type="term" value="F:ATP binding"/>
    <property type="evidence" value="ECO:0007669"/>
    <property type="project" value="UniProtKB-UniRule"/>
</dbReference>
<dbReference type="GO" id="GO:0004087">
    <property type="term" value="F:carbamoyl-phosphate synthase (ammonia) activity"/>
    <property type="evidence" value="ECO:0007669"/>
    <property type="project" value="RHEA"/>
</dbReference>
<dbReference type="GO" id="GO:0004088">
    <property type="term" value="F:carbamoyl-phosphate synthase (glutamine-hydrolyzing) activity"/>
    <property type="evidence" value="ECO:0007669"/>
    <property type="project" value="UniProtKB-UniRule"/>
</dbReference>
<dbReference type="GO" id="GO:0046872">
    <property type="term" value="F:metal ion binding"/>
    <property type="evidence" value="ECO:0007669"/>
    <property type="project" value="UniProtKB-KW"/>
</dbReference>
<dbReference type="GO" id="GO:0044205">
    <property type="term" value="P:'de novo' UMP biosynthetic process"/>
    <property type="evidence" value="ECO:0007669"/>
    <property type="project" value="UniProtKB-UniRule"/>
</dbReference>
<dbReference type="GO" id="GO:0006541">
    <property type="term" value="P:glutamine metabolic process"/>
    <property type="evidence" value="ECO:0007669"/>
    <property type="project" value="TreeGrafter"/>
</dbReference>
<dbReference type="GO" id="GO:0006526">
    <property type="term" value="P:L-arginine biosynthetic process"/>
    <property type="evidence" value="ECO:0007669"/>
    <property type="project" value="UniProtKB-UniRule"/>
</dbReference>
<dbReference type="FunFam" id="1.10.1030.10:FF:000002">
    <property type="entry name" value="Carbamoyl-phosphate synthase large chain"/>
    <property type="match status" value="1"/>
</dbReference>
<dbReference type="FunFam" id="3.30.470.20:FF:000007">
    <property type="entry name" value="Carbamoyl-phosphate synthase large chain"/>
    <property type="match status" value="1"/>
</dbReference>
<dbReference type="FunFam" id="3.30.470.20:FF:000014">
    <property type="entry name" value="Carbamoyl-phosphate synthase large chain"/>
    <property type="match status" value="1"/>
</dbReference>
<dbReference type="FunFam" id="3.40.50.20:FF:000001">
    <property type="entry name" value="Carbamoyl-phosphate synthase large chain"/>
    <property type="match status" value="1"/>
</dbReference>
<dbReference type="FunFam" id="3.40.50.20:FF:000002">
    <property type="entry name" value="Carbamoyl-phosphate synthase large chain"/>
    <property type="match status" value="1"/>
</dbReference>
<dbReference type="Gene3D" id="3.40.50.20">
    <property type="match status" value="2"/>
</dbReference>
<dbReference type="Gene3D" id="3.30.470.20">
    <property type="entry name" value="ATP-grasp fold, B domain"/>
    <property type="match status" value="2"/>
</dbReference>
<dbReference type="Gene3D" id="1.10.1030.10">
    <property type="entry name" value="Carbamoyl-phosphate synthetase, large subunit oligomerisation domain"/>
    <property type="match status" value="1"/>
</dbReference>
<dbReference type="Gene3D" id="3.40.50.1380">
    <property type="entry name" value="Methylglyoxal synthase-like domain"/>
    <property type="match status" value="1"/>
</dbReference>
<dbReference type="HAMAP" id="MF_01210_B">
    <property type="entry name" value="CPSase_L_chain_B"/>
    <property type="match status" value="1"/>
</dbReference>
<dbReference type="InterPro" id="IPR011761">
    <property type="entry name" value="ATP-grasp"/>
</dbReference>
<dbReference type="InterPro" id="IPR006275">
    <property type="entry name" value="CarbamoylP_synth_lsu"/>
</dbReference>
<dbReference type="InterPro" id="IPR005480">
    <property type="entry name" value="CarbamoylP_synth_lsu_oligo"/>
</dbReference>
<dbReference type="InterPro" id="IPR036897">
    <property type="entry name" value="CarbamoylP_synth_lsu_oligo_sf"/>
</dbReference>
<dbReference type="InterPro" id="IPR005479">
    <property type="entry name" value="CbamoylP_synth_lsu-like_ATP-bd"/>
</dbReference>
<dbReference type="InterPro" id="IPR005483">
    <property type="entry name" value="CbamoylP_synth_lsu_CPSase_dom"/>
</dbReference>
<dbReference type="InterPro" id="IPR011607">
    <property type="entry name" value="MGS-like_dom"/>
</dbReference>
<dbReference type="InterPro" id="IPR036914">
    <property type="entry name" value="MGS-like_dom_sf"/>
</dbReference>
<dbReference type="InterPro" id="IPR016185">
    <property type="entry name" value="PreATP-grasp_dom_sf"/>
</dbReference>
<dbReference type="NCBIfam" id="TIGR01369">
    <property type="entry name" value="CPSaseII_lrg"/>
    <property type="match status" value="1"/>
</dbReference>
<dbReference type="NCBIfam" id="NF003671">
    <property type="entry name" value="PRK05294.1"/>
    <property type="match status" value="1"/>
</dbReference>
<dbReference type="NCBIfam" id="NF009455">
    <property type="entry name" value="PRK12815.1"/>
    <property type="match status" value="1"/>
</dbReference>
<dbReference type="PANTHER" id="PTHR11405:SF53">
    <property type="entry name" value="CARBAMOYL-PHOSPHATE SYNTHASE [AMMONIA], MITOCHONDRIAL"/>
    <property type="match status" value="1"/>
</dbReference>
<dbReference type="PANTHER" id="PTHR11405">
    <property type="entry name" value="CARBAMOYLTRANSFERASE FAMILY MEMBER"/>
    <property type="match status" value="1"/>
</dbReference>
<dbReference type="Pfam" id="PF02786">
    <property type="entry name" value="CPSase_L_D2"/>
    <property type="match status" value="2"/>
</dbReference>
<dbReference type="Pfam" id="PF02787">
    <property type="entry name" value="CPSase_L_D3"/>
    <property type="match status" value="1"/>
</dbReference>
<dbReference type="Pfam" id="PF02142">
    <property type="entry name" value="MGS"/>
    <property type="match status" value="1"/>
</dbReference>
<dbReference type="PRINTS" id="PR00098">
    <property type="entry name" value="CPSASE"/>
</dbReference>
<dbReference type="SMART" id="SM01096">
    <property type="entry name" value="CPSase_L_D3"/>
    <property type="match status" value="1"/>
</dbReference>
<dbReference type="SMART" id="SM00851">
    <property type="entry name" value="MGS"/>
    <property type="match status" value="1"/>
</dbReference>
<dbReference type="SUPFAM" id="SSF48108">
    <property type="entry name" value="Carbamoyl phosphate synthetase, large subunit connection domain"/>
    <property type="match status" value="1"/>
</dbReference>
<dbReference type="SUPFAM" id="SSF56059">
    <property type="entry name" value="Glutathione synthetase ATP-binding domain-like"/>
    <property type="match status" value="2"/>
</dbReference>
<dbReference type="SUPFAM" id="SSF52335">
    <property type="entry name" value="Methylglyoxal synthase-like"/>
    <property type="match status" value="1"/>
</dbReference>
<dbReference type="SUPFAM" id="SSF52440">
    <property type="entry name" value="PreATP-grasp domain"/>
    <property type="match status" value="2"/>
</dbReference>
<dbReference type="PROSITE" id="PS50975">
    <property type="entry name" value="ATP_GRASP"/>
    <property type="match status" value="2"/>
</dbReference>
<dbReference type="PROSITE" id="PS00866">
    <property type="entry name" value="CPSASE_1"/>
    <property type="match status" value="2"/>
</dbReference>
<dbReference type="PROSITE" id="PS00867">
    <property type="entry name" value="CPSASE_2"/>
    <property type="match status" value="2"/>
</dbReference>
<dbReference type="PROSITE" id="PS51855">
    <property type="entry name" value="MGS"/>
    <property type="match status" value="1"/>
</dbReference>
<protein>
    <recommendedName>
        <fullName evidence="1">Carbamoyl phosphate synthase large chain</fullName>
        <ecNumber evidence="1">6.3.4.16</ecNumber>
        <ecNumber evidence="1">6.3.5.5</ecNumber>
    </recommendedName>
    <alternativeName>
        <fullName evidence="1">Carbamoyl phosphate synthetase ammonia chain</fullName>
    </alternativeName>
</protein>
<keyword id="KW-0028">Amino-acid biosynthesis</keyword>
<keyword id="KW-0055">Arginine biosynthesis</keyword>
<keyword id="KW-0067">ATP-binding</keyword>
<keyword id="KW-0436">Ligase</keyword>
<keyword id="KW-0460">Magnesium</keyword>
<keyword id="KW-0464">Manganese</keyword>
<keyword id="KW-0479">Metal-binding</keyword>
<keyword id="KW-0547">Nucleotide-binding</keyword>
<keyword id="KW-0665">Pyrimidine biosynthesis</keyword>
<keyword id="KW-1185">Reference proteome</keyword>
<keyword id="KW-0677">Repeat</keyword>
<accession>B8DTW3</accession>
<sequence length="1136" mass="124699">MPKRTDIKSVMVIGSGPIVIGQAAEFDYSGTQACRVLREEGVRVILVNSNPATIMTDPEMADATYIDPISTPILEKIIAKERPDALLPTLGGQTALNAAVALGEAGVLKKYNVELIGASLEAIDRGEDRESFKKVVKEAGAESARSDIAHTLEEVDAIAERFGFPLVVRPSFTMGGLGSGIAHDTEELHRIAGAGIHYSPTDEVLIEEGIEGWKEYELELMRDRNDNVVVVCPIENVDPVGVHTGDSITVAPVFTLTDREYQKLRDIGIAIIRGVGVDTGGCNIQFAIHPDTGRIIVIEMNPRVSRSSALASKATGFPIAKIATKLALGYTLDEIQNDITRSTPASFEPTIDYVVTKVPRFAFEKFPGADPTLTTSMKSVGEAMALAGNFQESLGKAMRSIDKRHMGFSWDGEKPSEGEVHELLEQMRIPTEHRYLQVMRAIWGGATPEQIFNATKIDPWFIDQFFQINATAMQVRGAETLSKRLLRKAKLAGLSDVQIAHLRRLGDEGENTIRELRWNYGLHPVFKTVDTCAAEFAAQTPYYYSCYADETELRKREREAVIILGSGPNRIGQGIEFDYTCVHAVQELGKDYDTIMVNCNPETVSTDYDMSDRLYFEPLTFEDVLEIYEAEKKQGPIKGVIVQLGGQTPLSLAARLKAAGVPILGTTPEAIDLAENRELFGEVLRQEHLNAPRFGTALSLEEAREAAHNIGYPVLVRPSYVLGGRGMEIVYDDAQLETYVNRALSEAKADTVVSGRLPSPLLIDKFLQDAIEIDVDALFDGEELYIGGIMEHIEEAGVHSGDAACTLPPSTLSDDQIRRLREATLAIAKGCQVRGLMNVQYAFMANTLYVIEANPRASRTVPFASKATGVALAKAAARIMAGETIEQQRENGLLLPYGDGGDVRLGQQVAVKESVLPFKRFRTPVGKTVDILLGPEMRSTGEVMGFDRDFPHAFAKSQLASYEGGLPTNGNVFISVNDTDKRQLPLFAVRLVELGFEIWATEGTASVLRRYGIESKIVDKIHSRVDTDPEHPIEIQHAAGSVGKNVVELIEEGQIDLILNTPNSRGSRSDGYSIRAAAIAADIPQYTTMTEFSAVLLAIEAVKKNDYEVMSIQEHSRELYELERKHKEEGEEARAQ</sequence>
<proteinExistence type="inferred from homology"/>
<name>CARB_BIFA0</name>
<organism>
    <name type="scientific">Bifidobacterium animalis subsp. lactis (strain AD011)</name>
    <dbReference type="NCBI Taxonomy" id="442563"/>
    <lineage>
        <taxon>Bacteria</taxon>
        <taxon>Bacillati</taxon>
        <taxon>Actinomycetota</taxon>
        <taxon>Actinomycetes</taxon>
        <taxon>Bifidobacteriales</taxon>
        <taxon>Bifidobacteriaceae</taxon>
        <taxon>Bifidobacterium</taxon>
    </lineage>
</organism>
<feature type="chain" id="PRO_1000164707" description="Carbamoyl phosphate synthase large chain">
    <location>
        <begin position="1"/>
        <end position="1136"/>
    </location>
</feature>
<feature type="domain" description="ATP-grasp 1" evidence="1">
    <location>
        <begin position="133"/>
        <end position="328"/>
    </location>
</feature>
<feature type="domain" description="ATP-grasp 2" evidence="1">
    <location>
        <begin position="681"/>
        <end position="881"/>
    </location>
</feature>
<feature type="domain" description="MGS-like" evidence="1">
    <location>
        <begin position="964"/>
        <end position="1122"/>
    </location>
</feature>
<feature type="region of interest" description="Carboxyphosphate synthetic domain" evidence="1">
    <location>
        <begin position="1"/>
        <end position="402"/>
    </location>
</feature>
<feature type="region of interest" description="Oligomerization domain" evidence="1">
    <location>
        <begin position="403"/>
        <end position="551"/>
    </location>
</feature>
<feature type="region of interest" description="Carbamoyl phosphate synthetic domain" evidence="1">
    <location>
        <begin position="552"/>
        <end position="962"/>
    </location>
</feature>
<feature type="region of interest" description="Allosteric domain" evidence="1">
    <location>
        <begin position="963"/>
        <end position="1136"/>
    </location>
</feature>
<feature type="binding site" evidence="1">
    <location>
        <position position="129"/>
    </location>
    <ligand>
        <name>ATP</name>
        <dbReference type="ChEBI" id="CHEBI:30616"/>
        <label>1</label>
    </ligand>
</feature>
<feature type="binding site" evidence="1">
    <location>
        <position position="169"/>
    </location>
    <ligand>
        <name>ATP</name>
        <dbReference type="ChEBI" id="CHEBI:30616"/>
        <label>1</label>
    </ligand>
</feature>
<feature type="binding site" evidence="1">
    <location>
        <position position="175"/>
    </location>
    <ligand>
        <name>ATP</name>
        <dbReference type="ChEBI" id="CHEBI:30616"/>
        <label>1</label>
    </ligand>
</feature>
<feature type="binding site" evidence="1">
    <location>
        <position position="176"/>
    </location>
    <ligand>
        <name>ATP</name>
        <dbReference type="ChEBI" id="CHEBI:30616"/>
        <label>1</label>
    </ligand>
</feature>
<feature type="binding site" evidence="1">
    <location>
        <position position="208"/>
    </location>
    <ligand>
        <name>ATP</name>
        <dbReference type="ChEBI" id="CHEBI:30616"/>
        <label>1</label>
    </ligand>
</feature>
<feature type="binding site" evidence="1">
    <location>
        <position position="210"/>
    </location>
    <ligand>
        <name>ATP</name>
        <dbReference type="ChEBI" id="CHEBI:30616"/>
        <label>1</label>
    </ligand>
</feature>
<feature type="binding site" evidence="1">
    <location>
        <position position="215"/>
    </location>
    <ligand>
        <name>ATP</name>
        <dbReference type="ChEBI" id="CHEBI:30616"/>
        <label>1</label>
    </ligand>
</feature>
<feature type="binding site" evidence="1">
    <location>
        <position position="241"/>
    </location>
    <ligand>
        <name>ATP</name>
        <dbReference type="ChEBI" id="CHEBI:30616"/>
        <label>1</label>
    </ligand>
</feature>
<feature type="binding site" evidence="1">
    <location>
        <position position="242"/>
    </location>
    <ligand>
        <name>ATP</name>
        <dbReference type="ChEBI" id="CHEBI:30616"/>
        <label>1</label>
    </ligand>
</feature>
<feature type="binding site" evidence="1">
    <location>
        <position position="243"/>
    </location>
    <ligand>
        <name>ATP</name>
        <dbReference type="ChEBI" id="CHEBI:30616"/>
        <label>1</label>
    </ligand>
</feature>
<feature type="binding site" evidence="1">
    <location>
        <position position="285"/>
    </location>
    <ligand>
        <name>ATP</name>
        <dbReference type="ChEBI" id="CHEBI:30616"/>
        <label>1</label>
    </ligand>
</feature>
<feature type="binding site" evidence="1">
    <location>
        <position position="285"/>
    </location>
    <ligand>
        <name>Mg(2+)</name>
        <dbReference type="ChEBI" id="CHEBI:18420"/>
        <label>1</label>
    </ligand>
</feature>
<feature type="binding site" evidence="1">
    <location>
        <position position="285"/>
    </location>
    <ligand>
        <name>Mn(2+)</name>
        <dbReference type="ChEBI" id="CHEBI:29035"/>
        <label>1</label>
    </ligand>
</feature>
<feature type="binding site" evidence="1">
    <location>
        <position position="299"/>
    </location>
    <ligand>
        <name>ATP</name>
        <dbReference type="ChEBI" id="CHEBI:30616"/>
        <label>1</label>
    </ligand>
</feature>
<feature type="binding site" evidence="1">
    <location>
        <position position="299"/>
    </location>
    <ligand>
        <name>Mg(2+)</name>
        <dbReference type="ChEBI" id="CHEBI:18420"/>
        <label>1</label>
    </ligand>
</feature>
<feature type="binding site" evidence="1">
    <location>
        <position position="299"/>
    </location>
    <ligand>
        <name>Mg(2+)</name>
        <dbReference type="ChEBI" id="CHEBI:18420"/>
        <label>2</label>
    </ligand>
</feature>
<feature type="binding site" evidence="1">
    <location>
        <position position="299"/>
    </location>
    <ligand>
        <name>Mn(2+)</name>
        <dbReference type="ChEBI" id="CHEBI:29035"/>
        <label>1</label>
    </ligand>
</feature>
<feature type="binding site" evidence="1">
    <location>
        <position position="299"/>
    </location>
    <ligand>
        <name>Mn(2+)</name>
        <dbReference type="ChEBI" id="CHEBI:29035"/>
        <label>2</label>
    </ligand>
</feature>
<feature type="binding site" evidence="1">
    <location>
        <position position="301"/>
    </location>
    <ligand>
        <name>Mg(2+)</name>
        <dbReference type="ChEBI" id="CHEBI:18420"/>
        <label>2</label>
    </ligand>
</feature>
<feature type="binding site" evidence="1">
    <location>
        <position position="301"/>
    </location>
    <ligand>
        <name>Mn(2+)</name>
        <dbReference type="ChEBI" id="CHEBI:29035"/>
        <label>2</label>
    </ligand>
</feature>
<feature type="binding site" evidence="1">
    <location>
        <position position="717"/>
    </location>
    <ligand>
        <name>ATP</name>
        <dbReference type="ChEBI" id="CHEBI:30616"/>
        <label>2</label>
    </ligand>
</feature>
<feature type="binding site" evidence="1">
    <location>
        <position position="765"/>
    </location>
    <ligand>
        <name>ATP</name>
        <dbReference type="ChEBI" id="CHEBI:30616"/>
        <label>2</label>
    </ligand>
</feature>
<feature type="binding site" evidence="1">
    <location>
        <position position="767"/>
    </location>
    <ligand>
        <name>ATP</name>
        <dbReference type="ChEBI" id="CHEBI:30616"/>
        <label>2</label>
    </ligand>
</feature>
<feature type="binding site" evidence="1">
    <location>
        <position position="772"/>
    </location>
    <ligand>
        <name>ATP</name>
        <dbReference type="ChEBI" id="CHEBI:30616"/>
        <label>2</label>
    </ligand>
</feature>
<feature type="binding site" evidence="1">
    <location>
        <position position="797"/>
    </location>
    <ligand>
        <name>ATP</name>
        <dbReference type="ChEBI" id="CHEBI:30616"/>
        <label>2</label>
    </ligand>
</feature>
<feature type="binding site" evidence="1">
    <location>
        <position position="798"/>
    </location>
    <ligand>
        <name>ATP</name>
        <dbReference type="ChEBI" id="CHEBI:30616"/>
        <label>2</label>
    </ligand>
</feature>
<feature type="binding site" evidence="1">
    <location>
        <position position="799"/>
    </location>
    <ligand>
        <name>ATP</name>
        <dbReference type="ChEBI" id="CHEBI:30616"/>
        <label>2</label>
    </ligand>
</feature>
<feature type="binding site" evidence="1">
    <location>
        <position position="800"/>
    </location>
    <ligand>
        <name>ATP</name>
        <dbReference type="ChEBI" id="CHEBI:30616"/>
        <label>2</label>
    </ligand>
</feature>
<feature type="binding site" evidence="1">
    <location>
        <position position="840"/>
    </location>
    <ligand>
        <name>ATP</name>
        <dbReference type="ChEBI" id="CHEBI:30616"/>
        <label>2</label>
    </ligand>
</feature>
<feature type="binding site" evidence="1">
    <location>
        <position position="840"/>
    </location>
    <ligand>
        <name>Mg(2+)</name>
        <dbReference type="ChEBI" id="CHEBI:18420"/>
        <label>3</label>
    </ligand>
</feature>
<feature type="binding site" evidence="1">
    <location>
        <position position="840"/>
    </location>
    <ligand>
        <name>Mn(2+)</name>
        <dbReference type="ChEBI" id="CHEBI:29035"/>
        <label>3</label>
    </ligand>
</feature>
<feature type="binding site" evidence="1">
    <location>
        <position position="852"/>
    </location>
    <ligand>
        <name>ATP</name>
        <dbReference type="ChEBI" id="CHEBI:30616"/>
        <label>2</label>
    </ligand>
</feature>
<feature type="binding site" evidence="1">
    <location>
        <position position="852"/>
    </location>
    <ligand>
        <name>Mg(2+)</name>
        <dbReference type="ChEBI" id="CHEBI:18420"/>
        <label>3</label>
    </ligand>
</feature>
<feature type="binding site" evidence="1">
    <location>
        <position position="852"/>
    </location>
    <ligand>
        <name>Mg(2+)</name>
        <dbReference type="ChEBI" id="CHEBI:18420"/>
        <label>4</label>
    </ligand>
</feature>
<feature type="binding site" evidence="1">
    <location>
        <position position="852"/>
    </location>
    <ligand>
        <name>Mn(2+)</name>
        <dbReference type="ChEBI" id="CHEBI:29035"/>
        <label>3</label>
    </ligand>
</feature>
<feature type="binding site" evidence="1">
    <location>
        <position position="852"/>
    </location>
    <ligand>
        <name>Mn(2+)</name>
        <dbReference type="ChEBI" id="CHEBI:29035"/>
        <label>4</label>
    </ligand>
</feature>
<feature type="binding site" evidence="1">
    <location>
        <position position="854"/>
    </location>
    <ligand>
        <name>Mg(2+)</name>
        <dbReference type="ChEBI" id="CHEBI:18420"/>
        <label>4</label>
    </ligand>
</feature>
<feature type="binding site" evidence="1">
    <location>
        <position position="854"/>
    </location>
    <ligand>
        <name>Mn(2+)</name>
        <dbReference type="ChEBI" id="CHEBI:29035"/>
        <label>4</label>
    </ligand>
</feature>
<reference key="1">
    <citation type="journal article" date="2009" name="J. Bacteriol.">
        <title>Genome sequence of the probiotic bacterium Bifidobacterium animalis subsp. lactis AD011.</title>
        <authorList>
            <person name="Kim J.F."/>
            <person name="Jeong H."/>
            <person name="Yu D.S."/>
            <person name="Choi S.-H."/>
            <person name="Hur C.-G."/>
            <person name="Park M.-S."/>
            <person name="Yoon S.H."/>
            <person name="Kim D.-W."/>
            <person name="Ji G.E."/>
            <person name="Park H.-S."/>
            <person name="Oh T.K."/>
        </authorList>
    </citation>
    <scope>NUCLEOTIDE SEQUENCE [LARGE SCALE GENOMIC DNA]</scope>
    <source>
        <strain>AD011</strain>
    </source>
</reference>
<gene>
    <name evidence="1" type="primary">carB</name>
    <name type="ordered locus">BLA_1154</name>
</gene>
<comment type="function">
    <text evidence="1">Large subunit of the glutamine-dependent carbamoyl phosphate synthetase (CPSase). CPSase catalyzes the formation of carbamoyl phosphate from the ammonia moiety of glutamine, carbonate, and phosphate donated by ATP, constituting the first step of 2 biosynthetic pathways, one leading to arginine and/or urea and the other to pyrimidine nucleotides. The large subunit (synthetase) binds the substrates ammonia (free or transferred from glutamine from the small subunit), hydrogencarbonate and ATP and carries out an ATP-coupled ligase reaction, activating hydrogencarbonate by forming carboxy phosphate which reacts with ammonia to form carbamoyl phosphate.</text>
</comment>
<comment type="catalytic activity">
    <reaction evidence="1">
        <text>hydrogencarbonate + L-glutamine + 2 ATP + H2O = carbamoyl phosphate + L-glutamate + 2 ADP + phosphate + 2 H(+)</text>
        <dbReference type="Rhea" id="RHEA:18633"/>
        <dbReference type="ChEBI" id="CHEBI:15377"/>
        <dbReference type="ChEBI" id="CHEBI:15378"/>
        <dbReference type="ChEBI" id="CHEBI:17544"/>
        <dbReference type="ChEBI" id="CHEBI:29985"/>
        <dbReference type="ChEBI" id="CHEBI:30616"/>
        <dbReference type="ChEBI" id="CHEBI:43474"/>
        <dbReference type="ChEBI" id="CHEBI:58228"/>
        <dbReference type="ChEBI" id="CHEBI:58359"/>
        <dbReference type="ChEBI" id="CHEBI:456216"/>
        <dbReference type="EC" id="6.3.5.5"/>
    </reaction>
</comment>
<comment type="catalytic activity">
    <molecule>Carbamoyl phosphate synthase large chain</molecule>
    <reaction evidence="1">
        <text>hydrogencarbonate + NH4(+) + 2 ATP = carbamoyl phosphate + 2 ADP + phosphate + 2 H(+)</text>
        <dbReference type="Rhea" id="RHEA:18029"/>
        <dbReference type="ChEBI" id="CHEBI:15378"/>
        <dbReference type="ChEBI" id="CHEBI:17544"/>
        <dbReference type="ChEBI" id="CHEBI:28938"/>
        <dbReference type="ChEBI" id="CHEBI:30616"/>
        <dbReference type="ChEBI" id="CHEBI:43474"/>
        <dbReference type="ChEBI" id="CHEBI:58228"/>
        <dbReference type="ChEBI" id="CHEBI:456216"/>
        <dbReference type="EC" id="6.3.4.16"/>
    </reaction>
</comment>
<comment type="cofactor">
    <cofactor evidence="1">
        <name>Mg(2+)</name>
        <dbReference type="ChEBI" id="CHEBI:18420"/>
    </cofactor>
    <cofactor evidence="1">
        <name>Mn(2+)</name>
        <dbReference type="ChEBI" id="CHEBI:29035"/>
    </cofactor>
    <text evidence="1">Binds 4 Mg(2+) or Mn(2+) ions per subunit.</text>
</comment>
<comment type="pathway">
    <text evidence="1">Amino-acid biosynthesis; L-arginine biosynthesis; carbamoyl phosphate from bicarbonate: step 1/1.</text>
</comment>
<comment type="pathway">
    <text evidence="1">Pyrimidine metabolism; UMP biosynthesis via de novo pathway; (S)-dihydroorotate from bicarbonate: step 1/3.</text>
</comment>
<comment type="subunit">
    <text evidence="1">Composed of two chains; the small (or glutamine) chain promotes the hydrolysis of glutamine to ammonia, which is used by the large (or ammonia) chain to synthesize carbamoyl phosphate. Tetramer of heterodimers (alpha,beta)4.</text>
</comment>
<comment type="domain">
    <text evidence="1">The large subunit is composed of 2 ATP-grasp domains that are involved in binding the 2 ATP molecules needed for carbamoyl phosphate synthesis. The N-terminal ATP-grasp domain (referred to as the carboxyphosphate synthetic component) catalyzes the ATP-dependent phosphorylation of hydrogencarbonate to carboxyphosphate and the subsequent nucleophilic attack by ammonia to form a carbamate intermediate. The C-terminal ATP-grasp domain (referred to as the carbamoyl phosphate synthetic component) then catalyzes the phosphorylation of carbamate with the second ATP to form the end product carbamoyl phosphate. The reactive and unstable enzyme intermediates are sequentially channeled from one active site to the next through the interior of the protein over a distance of at least 96 A.</text>
</comment>
<comment type="similarity">
    <text evidence="1">Belongs to the CarB family.</text>
</comment>